<gene>
    <name type="primary">rsmB</name>
    <name type="synonym">rrmB</name>
    <name type="ordered locus">XF_0928</name>
</gene>
<proteinExistence type="inferred from homology"/>
<reference key="1">
    <citation type="journal article" date="2000" name="Nature">
        <title>The genome sequence of the plant pathogen Xylella fastidiosa.</title>
        <authorList>
            <person name="Simpson A.J.G."/>
            <person name="Reinach F.C."/>
            <person name="Arruda P."/>
            <person name="Abreu F.A."/>
            <person name="Acencio M."/>
            <person name="Alvarenga R."/>
            <person name="Alves L.M.C."/>
            <person name="Araya J.E."/>
            <person name="Baia G.S."/>
            <person name="Baptista C.S."/>
            <person name="Barros M.H."/>
            <person name="Bonaccorsi E.D."/>
            <person name="Bordin S."/>
            <person name="Bove J.M."/>
            <person name="Briones M.R.S."/>
            <person name="Bueno M.R.P."/>
            <person name="Camargo A.A."/>
            <person name="Camargo L.E.A."/>
            <person name="Carraro D.M."/>
            <person name="Carrer H."/>
            <person name="Colauto N.B."/>
            <person name="Colombo C."/>
            <person name="Costa F.F."/>
            <person name="Costa M.C.R."/>
            <person name="Costa-Neto C.M."/>
            <person name="Coutinho L.L."/>
            <person name="Cristofani M."/>
            <person name="Dias-Neto E."/>
            <person name="Docena C."/>
            <person name="El-Dorry H."/>
            <person name="Facincani A.P."/>
            <person name="Ferreira A.J.S."/>
            <person name="Ferreira V.C.A."/>
            <person name="Ferro J.A."/>
            <person name="Fraga J.S."/>
            <person name="Franca S.C."/>
            <person name="Franco M.C."/>
            <person name="Frohme M."/>
            <person name="Furlan L.R."/>
            <person name="Garnier M."/>
            <person name="Goldman G.H."/>
            <person name="Goldman M.H.S."/>
            <person name="Gomes S.L."/>
            <person name="Gruber A."/>
            <person name="Ho P.L."/>
            <person name="Hoheisel J.D."/>
            <person name="Junqueira M.L."/>
            <person name="Kemper E.L."/>
            <person name="Kitajima J.P."/>
            <person name="Krieger J.E."/>
            <person name="Kuramae E.E."/>
            <person name="Laigret F."/>
            <person name="Lambais M.R."/>
            <person name="Leite L.C.C."/>
            <person name="Lemos E.G.M."/>
            <person name="Lemos M.V.F."/>
            <person name="Lopes S.A."/>
            <person name="Lopes C.R."/>
            <person name="Machado J.A."/>
            <person name="Machado M.A."/>
            <person name="Madeira A.M.B.N."/>
            <person name="Madeira H.M.F."/>
            <person name="Marino C.L."/>
            <person name="Marques M.V."/>
            <person name="Martins E.A.L."/>
            <person name="Martins E.M.F."/>
            <person name="Matsukuma A.Y."/>
            <person name="Menck C.F.M."/>
            <person name="Miracca E.C."/>
            <person name="Miyaki C.Y."/>
            <person name="Monteiro-Vitorello C.B."/>
            <person name="Moon D.H."/>
            <person name="Nagai M.A."/>
            <person name="Nascimento A.L.T.O."/>
            <person name="Netto L.E.S."/>
            <person name="Nhani A. Jr."/>
            <person name="Nobrega F.G."/>
            <person name="Nunes L.R."/>
            <person name="Oliveira M.A."/>
            <person name="de Oliveira M.C."/>
            <person name="de Oliveira R.C."/>
            <person name="Palmieri D.A."/>
            <person name="Paris A."/>
            <person name="Peixoto B.R."/>
            <person name="Pereira G.A.G."/>
            <person name="Pereira H.A. Jr."/>
            <person name="Pesquero J.B."/>
            <person name="Quaggio R.B."/>
            <person name="Roberto P.G."/>
            <person name="Rodrigues V."/>
            <person name="de Rosa A.J.M."/>
            <person name="de Rosa V.E. Jr."/>
            <person name="de Sa R.G."/>
            <person name="Santelli R.V."/>
            <person name="Sawasaki H.E."/>
            <person name="da Silva A.C.R."/>
            <person name="da Silva A.M."/>
            <person name="da Silva F.R."/>
            <person name="Silva W.A. Jr."/>
            <person name="da Silveira J.F."/>
            <person name="Silvestri M.L.Z."/>
            <person name="Siqueira W.J."/>
            <person name="de Souza A.A."/>
            <person name="de Souza A.P."/>
            <person name="Terenzi M.F."/>
            <person name="Truffi D."/>
            <person name="Tsai S.M."/>
            <person name="Tsuhako M.H."/>
            <person name="Vallada H."/>
            <person name="Van Sluys M.A."/>
            <person name="Verjovski-Almeida S."/>
            <person name="Vettore A.L."/>
            <person name="Zago M.A."/>
            <person name="Zatz M."/>
            <person name="Meidanis J."/>
            <person name="Setubal J.C."/>
        </authorList>
    </citation>
    <scope>NUCLEOTIDE SEQUENCE [LARGE SCALE GENOMIC DNA]</scope>
    <source>
        <strain>9a5c</strain>
    </source>
</reference>
<protein>
    <recommendedName>
        <fullName>Ribosomal RNA small subunit methyltransferase B</fullName>
        <ecNumber>2.1.1.176</ecNumber>
    </recommendedName>
    <alternativeName>
        <fullName>16S rRNA m5C967 methyltransferase</fullName>
    </alternativeName>
    <alternativeName>
        <fullName>rRNA (cytosine-C(5)-)-methyltransferase RsmB</fullName>
    </alternativeName>
</protein>
<accession>Q9PEV0</accession>
<comment type="function">
    <text evidence="1">Specifically methylates the cytosine at position 967 (m5C967) of 16S rRNA.</text>
</comment>
<comment type="catalytic activity">
    <reaction>
        <text>cytidine(967) in 16S rRNA + S-adenosyl-L-methionine = 5-methylcytidine(967) in 16S rRNA + S-adenosyl-L-homocysteine + H(+)</text>
        <dbReference type="Rhea" id="RHEA:42748"/>
        <dbReference type="Rhea" id="RHEA-COMP:10219"/>
        <dbReference type="Rhea" id="RHEA-COMP:10220"/>
        <dbReference type="ChEBI" id="CHEBI:15378"/>
        <dbReference type="ChEBI" id="CHEBI:57856"/>
        <dbReference type="ChEBI" id="CHEBI:59789"/>
        <dbReference type="ChEBI" id="CHEBI:74483"/>
        <dbReference type="ChEBI" id="CHEBI:82748"/>
        <dbReference type="EC" id="2.1.1.176"/>
    </reaction>
</comment>
<comment type="subcellular location">
    <subcellularLocation>
        <location evidence="3">Cytoplasm</location>
    </subcellularLocation>
</comment>
<comment type="similarity">
    <text evidence="2">Belongs to the class I-like SAM-binding methyltransferase superfamily. RsmB/NOP family.</text>
</comment>
<organism>
    <name type="scientific">Xylella fastidiosa (strain 9a5c)</name>
    <dbReference type="NCBI Taxonomy" id="160492"/>
    <lineage>
        <taxon>Bacteria</taxon>
        <taxon>Pseudomonadati</taxon>
        <taxon>Pseudomonadota</taxon>
        <taxon>Gammaproteobacteria</taxon>
        <taxon>Lysobacterales</taxon>
        <taxon>Lysobacteraceae</taxon>
        <taxon>Xylella</taxon>
    </lineage>
</organism>
<feature type="chain" id="PRO_0000211812" description="Ribosomal RNA small subunit methyltransferase B">
    <location>
        <begin position="1"/>
        <end position="421"/>
    </location>
</feature>
<feature type="active site" description="Nucleophile" evidence="2">
    <location>
        <position position="362"/>
    </location>
</feature>
<feature type="binding site" evidence="2">
    <location>
        <begin position="241"/>
        <end position="247"/>
    </location>
    <ligand>
        <name>S-adenosyl-L-methionine</name>
        <dbReference type="ChEBI" id="CHEBI:59789"/>
    </ligand>
</feature>
<feature type="binding site" evidence="2">
    <location>
        <position position="264"/>
    </location>
    <ligand>
        <name>S-adenosyl-L-methionine</name>
        <dbReference type="ChEBI" id="CHEBI:59789"/>
    </ligand>
</feature>
<feature type="binding site" evidence="2">
    <location>
        <position position="290"/>
    </location>
    <ligand>
        <name>S-adenosyl-L-methionine</name>
        <dbReference type="ChEBI" id="CHEBI:59789"/>
    </ligand>
</feature>
<feature type="binding site" evidence="2">
    <location>
        <position position="309"/>
    </location>
    <ligand>
        <name>S-adenosyl-L-methionine</name>
        <dbReference type="ChEBI" id="CHEBI:59789"/>
    </ligand>
</feature>
<name>RSMB_XYLFA</name>
<dbReference type="EC" id="2.1.1.176"/>
<dbReference type="EMBL" id="AE003849">
    <property type="protein sequence ID" value="AAF83738.1"/>
    <property type="molecule type" value="Genomic_DNA"/>
</dbReference>
<dbReference type="PIR" id="A82744">
    <property type="entry name" value="A82744"/>
</dbReference>
<dbReference type="SMR" id="Q9PEV0"/>
<dbReference type="STRING" id="160492.XF_0928"/>
<dbReference type="KEGG" id="xfa:XF_0928"/>
<dbReference type="eggNOG" id="COG0144">
    <property type="taxonomic scope" value="Bacteria"/>
</dbReference>
<dbReference type="eggNOG" id="COG0781">
    <property type="taxonomic scope" value="Bacteria"/>
</dbReference>
<dbReference type="HOGENOM" id="CLU_005316_0_4_6"/>
<dbReference type="Proteomes" id="UP000000812">
    <property type="component" value="Chromosome"/>
</dbReference>
<dbReference type="GO" id="GO:0005829">
    <property type="term" value="C:cytosol"/>
    <property type="evidence" value="ECO:0007669"/>
    <property type="project" value="TreeGrafter"/>
</dbReference>
<dbReference type="GO" id="GO:0003723">
    <property type="term" value="F:RNA binding"/>
    <property type="evidence" value="ECO:0007669"/>
    <property type="project" value="UniProtKB-KW"/>
</dbReference>
<dbReference type="GO" id="GO:0009383">
    <property type="term" value="F:rRNA (cytosine-C5-)-methyltransferase activity"/>
    <property type="evidence" value="ECO:0007669"/>
    <property type="project" value="TreeGrafter"/>
</dbReference>
<dbReference type="GO" id="GO:0006355">
    <property type="term" value="P:regulation of DNA-templated transcription"/>
    <property type="evidence" value="ECO:0007669"/>
    <property type="project" value="InterPro"/>
</dbReference>
<dbReference type="GO" id="GO:0070475">
    <property type="term" value="P:rRNA base methylation"/>
    <property type="evidence" value="ECO:0007669"/>
    <property type="project" value="TreeGrafter"/>
</dbReference>
<dbReference type="CDD" id="cd02440">
    <property type="entry name" value="AdoMet_MTases"/>
    <property type="match status" value="1"/>
</dbReference>
<dbReference type="FunFam" id="3.40.50.150:FF:000022">
    <property type="entry name" value="Ribosomal RNA small subunit methyltransferase B"/>
    <property type="match status" value="1"/>
</dbReference>
<dbReference type="Gene3D" id="1.10.940.10">
    <property type="entry name" value="NusB-like"/>
    <property type="match status" value="1"/>
</dbReference>
<dbReference type="Gene3D" id="3.30.70.1170">
    <property type="entry name" value="Sun protein, domain 3"/>
    <property type="match status" value="1"/>
</dbReference>
<dbReference type="Gene3D" id="3.40.50.150">
    <property type="entry name" value="Vaccinia Virus protein VP39"/>
    <property type="match status" value="1"/>
</dbReference>
<dbReference type="InterPro" id="IPR049560">
    <property type="entry name" value="MeTrfase_RsmB-F_NOP2_cat"/>
</dbReference>
<dbReference type="InterPro" id="IPR001678">
    <property type="entry name" value="MeTrfase_RsmB-F_NOP2_dom"/>
</dbReference>
<dbReference type="InterPro" id="IPR035926">
    <property type="entry name" value="NusB-like_sf"/>
</dbReference>
<dbReference type="InterPro" id="IPR006027">
    <property type="entry name" value="NusB_RsmB_TIM44"/>
</dbReference>
<dbReference type="InterPro" id="IPR023267">
    <property type="entry name" value="RCMT"/>
</dbReference>
<dbReference type="InterPro" id="IPR004573">
    <property type="entry name" value="rRNA_ssu_MeTfrase_B"/>
</dbReference>
<dbReference type="InterPro" id="IPR054728">
    <property type="entry name" value="RsmB-like_ferredoxin"/>
</dbReference>
<dbReference type="InterPro" id="IPR018314">
    <property type="entry name" value="RsmB/NOL1/NOP2-like_CS"/>
</dbReference>
<dbReference type="InterPro" id="IPR029063">
    <property type="entry name" value="SAM-dependent_MTases_sf"/>
</dbReference>
<dbReference type="NCBIfam" id="NF008149">
    <property type="entry name" value="PRK10901.1"/>
    <property type="match status" value="1"/>
</dbReference>
<dbReference type="NCBIfam" id="TIGR00563">
    <property type="entry name" value="rsmB"/>
    <property type="match status" value="1"/>
</dbReference>
<dbReference type="PANTHER" id="PTHR22807:SF61">
    <property type="entry name" value="NOL1_NOP2_SUN FAMILY PROTEIN _ ANTITERMINATION NUSB DOMAIN-CONTAINING PROTEIN"/>
    <property type="match status" value="1"/>
</dbReference>
<dbReference type="PANTHER" id="PTHR22807">
    <property type="entry name" value="NOP2 YEAST -RELATED NOL1/NOP2/FMU SUN DOMAIN-CONTAINING"/>
    <property type="match status" value="1"/>
</dbReference>
<dbReference type="Pfam" id="PF01189">
    <property type="entry name" value="Methyltr_RsmB-F"/>
    <property type="match status" value="1"/>
</dbReference>
<dbReference type="Pfam" id="PF01029">
    <property type="entry name" value="NusB"/>
    <property type="match status" value="1"/>
</dbReference>
<dbReference type="Pfam" id="PF22458">
    <property type="entry name" value="RsmF-B_ferredox"/>
    <property type="match status" value="1"/>
</dbReference>
<dbReference type="PRINTS" id="PR02008">
    <property type="entry name" value="RCMTFAMILY"/>
</dbReference>
<dbReference type="SUPFAM" id="SSF48013">
    <property type="entry name" value="NusB-like"/>
    <property type="match status" value="1"/>
</dbReference>
<dbReference type="SUPFAM" id="SSF53335">
    <property type="entry name" value="S-adenosyl-L-methionine-dependent methyltransferases"/>
    <property type="match status" value="1"/>
</dbReference>
<dbReference type="PROSITE" id="PS01153">
    <property type="entry name" value="NOL1_NOP2_SUN"/>
    <property type="match status" value="1"/>
</dbReference>
<dbReference type="PROSITE" id="PS51686">
    <property type="entry name" value="SAM_MT_RSMB_NOP"/>
    <property type="match status" value="1"/>
</dbReference>
<sequence>MVAARVLALVVDQGRSLKTELAAALPTLEDVRDRALVEAICFAVLRRRPVYEAALTQWLARPLGRGDAQLRGLLMVGFAQLDVLKVPPYAALSATVDACRVLGWPHRASFVNAVLRRAQRERLPVVSSDAAWPRWLAERIRADWGELAEAIFDASLKPAPMWLRVNLRYGDRHTYVQRLQAAGLEAVPSGLVPEALALDCSMPVLQLPGFQAGEVSVQDLSAQQVAALLSPAPHARVLDACAAPGGKAAHLLERAPTLCLTALDVDMQRLRRVAETCDRIHVKARLCVADATDLAAWWDGEAFDAVLLDAPCSATGVVRRQPDVLLHRRAEDLLPLLNIQSRLLDACWRTLRPGGVLVYVTCSVLRAENQTQLEAFLARTVDACAEDPGDAYGQPAGLGRQRLPGEQGGDGFFYARLIKEI</sequence>
<keyword id="KW-0963">Cytoplasm</keyword>
<keyword id="KW-0489">Methyltransferase</keyword>
<keyword id="KW-0690">Ribosome biogenesis</keyword>
<keyword id="KW-0694">RNA-binding</keyword>
<keyword id="KW-0698">rRNA processing</keyword>
<keyword id="KW-0949">S-adenosyl-L-methionine</keyword>
<keyword id="KW-0808">Transferase</keyword>
<evidence type="ECO:0000250" key="1"/>
<evidence type="ECO:0000255" key="2">
    <source>
        <dbReference type="PROSITE-ProRule" id="PRU01023"/>
    </source>
</evidence>
<evidence type="ECO:0000305" key="3"/>